<gene>
    <name type="primary">trxB</name>
    <name type="ordered locus">all2341</name>
</gene>
<evidence type="ECO:0000255" key="1">
    <source>
        <dbReference type="PROSITE-ProRule" id="PRU00691"/>
    </source>
</evidence>
<evidence type="ECO:0000269" key="2">
    <source>
    </source>
</evidence>
<evidence type="ECO:0000303" key="3">
    <source>
    </source>
</evidence>
<evidence type="ECO:0000305" key="4"/>
<evidence type="ECO:0007829" key="5">
    <source>
        <dbReference type="PDB" id="1THX"/>
    </source>
</evidence>
<organism>
    <name type="scientific">Nostoc sp. (strain PCC 7120 / SAG 25.82 / UTEX 2576)</name>
    <dbReference type="NCBI Taxonomy" id="103690"/>
    <lineage>
        <taxon>Bacteria</taxon>
        <taxon>Bacillati</taxon>
        <taxon>Cyanobacteriota</taxon>
        <taxon>Cyanophyceae</taxon>
        <taxon>Nostocales</taxon>
        <taxon>Nostocaceae</taxon>
        <taxon>Nostoc</taxon>
    </lineage>
</organism>
<sequence length="111" mass="12366">MSKGVITITDAEFESEVLKAEQPVLVYFWASWCGPCQLMSPLINLAANTYSDRLKVVKLEIDPNPTTVKKYKVEGVPALRLVKGEQILDSTEGVISKDKLLSFLDTHLNNN</sequence>
<name>THIO2_NOSS1</name>
<keyword id="KW-0002">3D-structure</keyword>
<keyword id="KW-1015">Disulfide bond</keyword>
<keyword id="KW-0249">Electron transport</keyword>
<keyword id="KW-0676">Redox-active center</keyword>
<keyword id="KW-1185">Reference proteome</keyword>
<keyword id="KW-0813">Transport</keyword>
<dbReference type="EMBL" id="M22997">
    <property type="protein sequence ID" value="AAA22048.1"/>
    <property type="molecule type" value="Genomic_DNA"/>
</dbReference>
<dbReference type="EMBL" id="BA000019">
    <property type="protein sequence ID" value="BAB74040.1"/>
    <property type="status" value="ALT_INIT"/>
    <property type="molecule type" value="Genomic_DNA"/>
</dbReference>
<dbReference type="PIR" id="A32233">
    <property type="entry name" value="A32233"/>
</dbReference>
<dbReference type="PIR" id="AF2098">
    <property type="entry name" value="AF2098"/>
</dbReference>
<dbReference type="RefSeq" id="WP_044521338.1">
    <property type="nucleotide sequence ID" value="NZ_RSCN01000004.1"/>
</dbReference>
<dbReference type="PDB" id="1THX">
    <property type="method" value="X-ray"/>
    <property type="resolution" value="1.60 A"/>
    <property type="chains" value="A=1-111"/>
</dbReference>
<dbReference type="PDBsum" id="1THX"/>
<dbReference type="SMR" id="P20857"/>
<dbReference type="STRING" id="103690.gene:10494370"/>
<dbReference type="KEGG" id="ana:all2341"/>
<dbReference type="eggNOG" id="COG3118">
    <property type="taxonomic scope" value="Bacteria"/>
</dbReference>
<dbReference type="OrthoDB" id="530955at2"/>
<dbReference type="EvolutionaryTrace" id="P20857"/>
<dbReference type="Proteomes" id="UP000002483">
    <property type="component" value="Chromosome"/>
</dbReference>
<dbReference type="GO" id="GO:0005829">
    <property type="term" value="C:cytosol"/>
    <property type="evidence" value="ECO:0007669"/>
    <property type="project" value="TreeGrafter"/>
</dbReference>
<dbReference type="GO" id="GO:0015035">
    <property type="term" value="F:protein-disulfide reductase activity"/>
    <property type="evidence" value="ECO:0007669"/>
    <property type="project" value="InterPro"/>
</dbReference>
<dbReference type="GO" id="GO:0045454">
    <property type="term" value="P:cell redox homeostasis"/>
    <property type="evidence" value="ECO:0007669"/>
    <property type="project" value="TreeGrafter"/>
</dbReference>
<dbReference type="CDD" id="cd02947">
    <property type="entry name" value="TRX_family"/>
    <property type="match status" value="1"/>
</dbReference>
<dbReference type="FunFam" id="3.40.30.10:FF:000001">
    <property type="entry name" value="Thioredoxin"/>
    <property type="match status" value="1"/>
</dbReference>
<dbReference type="Gene3D" id="3.40.30.10">
    <property type="entry name" value="Glutaredoxin"/>
    <property type="match status" value="1"/>
</dbReference>
<dbReference type="InterPro" id="IPR005746">
    <property type="entry name" value="Thioredoxin"/>
</dbReference>
<dbReference type="InterPro" id="IPR036249">
    <property type="entry name" value="Thioredoxin-like_sf"/>
</dbReference>
<dbReference type="InterPro" id="IPR017937">
    <property type="entry name" value="Thioredoxin_CS"/>
</dbReference>
<dbReference type="InterPro" id="IPR013766">
    <property type="entry name" value="Thioredoxin_domain"/>
</dbReference>
<dbReference type="PANTHER" id="PTHR45663">
    <property type="entry name" value="GEO12009P1"/>
    <property type="match status" value="1"/>
</dbReference>
<dbReference type="PANTHER" id="PTHR45663:SF11">
    <property type="entry name" value="GEO12009P1"/>
    <property type="match status" value="1"/>
</dbReference>
<dbReference type="Pfam" id="PF00085">
    <property type="entry name" value="Thioredoxin"/>
    <property type="match status" value="1"/>
</dbReference>
<dbReference type="PIRSF" id="PIRSF000077">
    <property type="entry name" value="Thioredoxin"/>
    <property type="match status" value="1"/>
</dbReference>
<dbReference type="PRINTS" id="PR00421">
    <property type="entry name" value="THIOREDOXIN"/>
</dbReference>
<dbReference type="SUPFAM" id="SSF52833">
    <property type="entry name" value="Thioredoxin-like"/>
    <property type="match status" value="1"/>
</dbReference>
<dbReference type="PROSITE" id="PS00194">
    <property type="entry name" value="THIOREDOXIN_1"/>
    <property type="match status" value="1"/>
</dbReference>
<dbReference type="PROSITE" id="PS51352">
    <property type="entry name" value="THIOREDOXIN_2"/>
    <property type="match status" value="1"/>
</dbReference>
<reference key="1">
    <citation type="journal article" date="1989" name="J. Bacteriol.">
        <title>Isolation, sequence, and expression in Escherichia coli of an unusual thioredoxin gene from the cyanobacterium Anabaena sp. strain PCC 7120.</title>
        <authorList>
            <person name="Alam J."/>
            <person name="Curtis S.E."/>
            <person name="Gleason F.K."/>
            <person name="Gerami-Nejad M."/>
            <person name="Fuchs J.A."/>
        </authorList>
    </citation>
    <scope>NUCLEOTIDE SEQUENCE [GENOMIC DNA]</scope>
    <source>
        <strain>PCC 7120 / SAG 25.82 / UTEX 2576</strain>
    </source>
</reference>
<reference key="2">
    <citation type="journal article" date="2001" name="DNA Res.">
        <title>Complete genomic sequence of the filamentous nitrogen-fixing cyanobacterium Anabaena sp. strain PCC 7120.</title>
        <authorList>
            <person name="Kaneko T."/>
            <person name="Nakamura Y."/>
            <person name="Wolk C.P."/>
            <person name="Kuritz T."/>
            <person name="Sasamoto S."/>
            <person name="Watanabe A."/>
            <person name="Iriguchi M."/>
            <person name="Ishikawa A."/>
            <person name="Kawashima K."/>
            <person name="Kimura T."/>
            <person name="Kishida Y."/>
            <person name="Kohara M."/>
            <person name="Matsumoto M."/>
            <person name="Matsuno A."/>
            <person name="Muraki A."/>
            <person name="Nakazaki N."/>
            <person name="Shimpo S."/>
            <person name="Sugimoto M."/>
            <person name="Takazawa M."/>
            <person name="Yamada M."/>
            <person name="Yasuda M."/>
            <person name="Tabata S."/>
        </authorList>
    </citation>
    <scope>NUCLEOTIDE SEQUENCE [LARGE SCALE GENOMIC DNA]</scope>
    <source>
        <strain>PCC 7120 / SAG 25.82 / UTEX 2576</strain>
    </source>
</reference>
<reference key="3">
    <citation type="journal article" date="1995" name="Structure">
        <title>Crystal structure of thioredoxin-2 from Anabaena.</title>
        <authorList>
            <person name="Saarinen M."/>
            <person name="Gleason F.K."/>
            <person name="Eklund H."/>
        </authorList>
    </citation>
    <scope>X-RAY CRYSTALLOGRAPHY (1.7 ANGSTROMS)</scope>
    <scope>DISULFIDE BOND</scope>
</reference>
<protein>
    <recommendedName>
        <fullName>Thioredoxin 2</fullName>
        <shortName evidence="3">Thioredoxin-2</shortName>
        <shortName>Trx-2</shortName>
    </recommendedName>
</protein>
<comment type="function">
    <text>Participates in various redox reactions through the reversible oxidation of its active center dithiol to a disulfide and catalyzes dithiol-disulfide exchange reactions.</text>
</comment>
<comment type="similarity">
    <text evidence="4">Belongs to the thioredoxin family.</text>
</comment>
<comment type="sequence caution" evidence="4">
    <conflict type="erroneous initiation">
        <sequence resource="EMBL-CDS" id="BAB74040"/>
    </conflict>
    <text>Extended N-terminus.</text>
</comment>
<accession>P20857</accession>
<proteinExistence type="evidence at protein level"/>
<feature type="chain" id="PRO_0000120075" description="Thioredoxin 2">
    <location>
        <begin position="1"/>
        <end position="111"/>
    </location>
</feature>
<feature type="domain" description="Thioredoxin" evidence="1">
    <location>
        <begin position="2"/>
        <end position="109"/>
    </location>
</feature>
<feature type="disulfide bond" description="Redox-active" evidence="1 2">
    <location>
        <begin position="33"/>
        <end position="36"/>
    </location>
</feature>
<feature type="strand" evidence="5">
    <location>
        <begin position="4"/>
        <end position="7"/>
    </location>
</feature>
<feature type="helix" evidence="5">
    <location>
        <begin position="10"/>
        <end position="12"/>
    </location>
</feature>
<feature type="helix" evidence="5">
    <location>
        <begin position="13"/>
        <end position="16"/>
    </location>
</feature>
<feature type="turn" evidence="5">
    <location>
        <begin position="17"/>
        <end position="19"/>
    </location>
</feature>
<feature type="strand" evidence="5">
    <location>
        <begin position="24"/>
        <end position="29"/>
    </location>
</feature>
<feature type="helix" evidence="5">
    <location>
        <begin position="36"/>
        <end position="49"/>
    </location>
</feature>
<feature type="turn" evidence="5">
    <location>
        <begin position="50"/>
        <end position="53"/>
    </location>
</feature>
<feature type="strand" evidence="5">
    <location>
        <begin position="55"/>
        <end position="61"/>
    </location>
</feature>
<feature type="helix" evidence="5">
    <location>
        <begin position="65"/>
        <end position="70"/>
    </location>
</feature>
<feature type="strand" evidence="5">
    <location>
        <begin position="75"/>
        <end position="83"/>
    </location>
</feature>
<feature type="strand" evidence="5">
    <location>
        <begin position="86"/>
        <end position="93"/>
    </location>
</feature>
<feature type="helix" evidence="5">
    <location>
        <begin position="97"/>
        <end position="108"/>
    </location>
</feature>